<name>GSX2_MOUSE</name>
<dbReference type="EMBL" id="S79041">
    <property type="protein sequence ID" value="AAB34947.1"/>
    <property type="molecule type" value="mRNA"/>
</dbReference>
<dbReference type="CCDS" id="CCDS19350.1"/>
<dbReference type="PIR" id="B37290">
    <property type="entry name" value="B37290"/>
</dbReference>
<dbReference type="RefSeq" id="NP_573555.1">
    <property type="nucleotide sequence ID" value="NM_133256.2"/>
</dbReference>
<dbReference type="PDB" id="8EML">
    <property type="method" value="X-ray"/>
    <property type="resolution" value="2.21 A"/>
    <property type="chains" value="A/B=203-264"/>
</dbReference>
<dbReference type="PDBsum" id="8EML"/>
<dbReference type="SMR" id="P31316"/>
<dbReference type="BioGRID" id="200086">
    <property type="interactions" value="2"/>
</dbReference>
<dbReference type="FunCoup" id="P31316">
    <property type="interactions" value="1875"/>
</dbReference>
<dbReference type="STRING" id="10090.ENSMUSP00000036625"/>
<dbReference type="PaxDb" id="10090-ENSMUSP00000036625"/>
<dbReference type="Antibodypedia" id="12271">
    <property type="antibodies" value="107 antibodies from 22 providers"/>
</dbReference>
<dbReference type="DNASU" id="14843"/>
<dbReference type="Ensembl" id="ENSMUST00000040477.4">
    <property type="protein sequence ID" value="ENSMUSP00000036625.4"/>
    <property type="gene ID" value="ENSMUSG00000035946.8"/>
</dbReference>
<dbReference type="GeneID" id="14843"/>
<dbReference type="KEGG" id="mmu:14843"/>
<dbReference type="UCSC" id="uc008xtx.1">
    <property type="organism name" value="mouse"/>
</dbReference>
<dbReference type="AGR" id="MGI:95843"/>
<dbReference type="CTD" id="170825"/>
<dbReference type="MGI" id="MGI:95843">
    <property type="gene designation" value="Gsx2"/>
</dbReference>
<dbReference type="VEuPathDB" id="HostDB:ENSMUSG00000035946"/>
<dbReference type="eggNOG" id="KOG0489">
    <property type="taxonomic scope" value="Eukaryota"/>
</dbReference>
<dbReference type="GeneTree" id="ENSGT00940000156043"/>
<dbReference type="HOGENOM" id="CLU_077153_0_0_1"/>
<dbReference type="InParanoid" id="P31316"/>
<dbReference type="OMA" id="CKCSTSQ"/>
<dbReference type="OrthoDB" id="6159439at2759"/>
<dbReference type="PhylomeDB" id="P31316"/>
<dbReference type="TreeFam" id="TF315938"/>
<dbReference type="BioGRID-ORCS" id="14843">
    <property type="hits" value="2 hits in 77 CRISPR screens"/>
</dbReference>
<dbReference type="PRO" id="PR:P31316"/>
<dbReference type="Proteomes" id="UP000000589">
    <property type="component" value="Chromosome 5"/>
</dbReference>
<dbReference type="RNAct" id="P31316">
    <property type="molecule type" value="protein"/>
</dbReference>
<dbReference type="Bgee" id="ENSMUSG00000035946">
    <property type="expression patterns" value="Expressed in ureteric bud trunk and 39 other cell types or tissues"/>
</dbReference>
<dbReference type="ExpressionAtlas" id="P31316">
    <property type="expression patterns" value="baseline and differential"/>
</dbReference>
<dbReference type="GO" id="GO:0005737">
    <property type="term" value="C:cytoplasm"/>
    <property type="evidence" value="ECO:0000250"/>
    <property type="project" value="UniProtKB"/>
</dbReference>
<dbReference type="GO" id="GO:0005634">
    <property type="term" value="C:nucleus"/>
    <property type="evidence" value="ECO:0000250"/>
    <property type="project" value="UniProtKB"/>
</dbReference>
<dbReference type="GO" id="GO:0003677">
    <property type="term" value="F:DNA binding"/>
    <property type="evidence" value="ECO:0000314"/>
    <property type="project" value="MGI"/>
</dbReference>
<dbReference type="GO" id="GO:0000981">
    <property type="term" value="F:DNA-binding transcription factor activity, RNA polymerase II-specific"/>
    <property type="evidence" value="ECO:0000250"/>
    <property type="project" value="UniProtKB"/>
</dbReference>
<dbReference type="GO" id="GO:1990837">
    <property type="term" value="F:sequence-specific double-stranded DNA binding"/>
    <property type="evidence" value="ECO:0007669"/>
    <property type="project" value="Ensembl"/>
</dbReference>
<dbReference type="GO" id="GO:0007420">
    <property type="term" value="P:brain development"/>
    <property type="evidence" value="ECO:0000316"/>
    <property type="project" value="MGI"/>
</dbReference>
<dbReference type="GO" id="GO:0007417">
    <property type="term" value="P:central nervous system development"/>
    <property type="evidence" value="ECO:0000315"/>
    <property type="project" value="MGI"/>
</dbReference>
<dbReference type="GO" id="GO:0021798">
    <property type="term" value="P:forebrain dorsal/ventral pattern formation"/>
    <property type="evidence" value="ECO:0000315"/>
    <property type="project" value="MGI"/>
</dbReference>
<dbReference type="GO" id="GO:0048853">
    <property type="term" value="P:forebrain morphogenesis"/>
    <property type="evidence" value="ECO:0000315"/>
    <property type="project" value="MGI"/>
</dbReference>
<dbReference type="GO" id="GO:0097154">
    <property type="term" value="P:GABAergic neuron differentiation"/>
    <property type="evidence" value="ECO:0000315"/>
    <property type="project" value="MGI"/>
</dbReference>
<dbReference type="GO" id="GO:0048699">
    <property type="term" value="P:generation of neurons"/>
    <property type="evidence" value="ECO:0000315"/>
    <property type="project" value="MGI"/>
</dbReference>
<dbReference type="GO" id="GO:0021575">
    <property type="term" value="P:hindbrain morphogenesis"/>
    <property type="evidence" value="ECO:0000315"/>
    <property type="project" value="MGI"/>
</dbReference>
<dbReference type="GO" id="GO:0048663">
    <property type="term" value="P:neuron fate commitment"/>
    <property type="evidence" value="ECO:0000316"/>
    <property type="project" value="MGI"/>
</dbReference>
<dbReference type="GO" id="GO:0048665">
    <property type="term" value="P:neuron fate specification"/>
    <property type="evidence" value="ECO:0000315"/>
    <property type="project" value="MGI"/>
</dbReference>
<dbReference type="GO" id="GO:0007219">
    <property type="term" value="P:Notch signaling pathway"/>
    <property type="evidence" value="ECO:0000315"/>
    <property type="project" value="MGI"/>
</dbReference>
<dbReference type="GO" id="GO:0021772">
    <property type="term" value="P:olfactory bulb development"/>
    <property type="evidence" value="ECO:0000315"/>
    <property type="project" value="MGI"/>
</dbReference>
<dbReference type="GO" id="GO:0021889">
    <property type="term" value="P:olfactory bulb interneuron differentiation"/>
    <property type="evidence" value="ECO:0000315"/>
    <property type="project" value="MGI"/>
</dbReference>
<dbReference type="GO" id="GO:0007389">
    <property type="term" value="P:pattern specification process"/>
    <property type="evidence" value="ECO:0000315"/>
    <property type="project" value="MGI"/>
</dbReference>
<dbReference type="GO" id="GO:0045747">
    <property type="term" value="P:positive regulation of Notch signaling pathway"/>
    <property type="evidence" value="ECO:0000315"/>
    <property type="project" value="MGI"/>
</dbReference>
<dbReference type="GO" id="GO:0048714">
    <property type="term" value="P:positive regulation of oligodendrocyte differentiation"/>
    <property type="evidence" value="ECO:0000315"/>
    <property type="project" value="MGI"/>
</dbReference>
<dbReference type="GO" id="GO:0030334">
    <property type="term" value="P:regulation of cell migration"/>
    <property type="evidence" value="ECO:0000315"/>
    <property type="project" value="MGI"/>
</dbReference>
<dbReference type="GO" id="GO:0002087">
    <property type="term" value="P:regulation of respiratory gaseous exchange by nervous system process"/>
    <property type="evidence" value="ECO:0000315"/>
    <property type="project" value="MGI"/>
</dbReference>
<dbReference type="GO" id="GO:0021527">
    <property type="term" value="P:spinal cord association neuron differentiation"/>
    <property type="evidence" value="ECO:0000316"/>
    <property type="project" value="MGI"/>
</dbReference>
<dbReference type="GO" id="GO:0021544">
    <property type="term" value="P:subpallium development"/>
    <property type="evidence" value="ECO:0000316"/>
    <property type="project" value="MGI"/>
</dbReference>
<dbReference type="GO" id="GO:0060163">
    <property type="term" value="P:subpallium neuron fate commitment"/>
    <property type="evidence" value="ECO:0000315"/>
    <property type="project" value="MGI"/>
</dbReference>
<dbReference type="GO" id="GO:0021978">
    <property type="term" value="P:telencephalon regionalization"/>
    <property type="evidence" value="ECO:0000315"/>
    <property type="project" value="MGI"/>
</dbReference>
<dbReference type="CDD" id="cd00086">
    <property type="entry name" value="homeodomain"/>
    <property type="match status" value="1"/>
</dbReference>
<dbReference type="FunFam" id="1.10.10.60:FF:000147">
    <property type="entry name" value="GS homeobox 2"/>
    <property type="match status" value="1"/>
</dbReference>
<dbReference type="Gene3D" id="1.10.10.60">
    <property type="entry name" value="Homeodomain-like"/>
    <property type="match status" value="1"/>
</dbReference>
<dbReference type="InterPro" id="IPR042191">
    <property type="entry name" value="GSH1/2"/>
</dbReference>
<dbReference type="InterPro" id="IPR001356">
    <property type="entry name" value="HD"/>
</dbReference>
<dbReference type="InterPro" id="IPR020479">
    <property type="entry name" value="HD_metazoa"/>
</dbReference>
<dbReference type="InterPro" id="IPR017970">
    <property type="entry name" value="Homeobox_CS"/>
</dbReference>
<dbReference type="InterPro" id="IPR009057">
    <property type="entry name" value="Homeodomain-like_sf"/>
</dbReference>
<dbReference type="PANTHER" id="PTHR47421">
    <property type="entry name" value="GS HOMEOBOX 2"/>
    <property type="match status" value="1"/>
</dbReference>
<dbReference type="PANTHER" id="PTHR47421:SF1">
    <property type="entry name" value="GS HOMEOBOX 2"/>
    <property type="match status" value="1"/>
</dbReference>
<dbReference type="Pfam" id="PF00046">
    <property type="entry name" value="Homeodomain"/>
    <property type="match status" value="1"/>
</dbReference>
<dbReference type="PRINTS" id="PR00024">
    <property type="entry name" value="HOMEOBOX"/>
</dbReference>
<dbReference type="SMART" id="SM00389">
    <property type="entry name" value="HOX"/>
    <property type="match status" value="1"/>
</dbReference>
<dbReference type="SUPFAM" id="SSF46689">
    <property type="entry name" value="Homeodomain-like"/>
    <property type="match status" value="1"/>
</dbReference>
<dbReference type="PROSITE" id="PS00027">
    <property type="entry name" value="HOMEOBOX_1"/>
    <property type="match status" value="1"/>
</dbReference>
<dbReference type="PROSITE" id="PS50071">
    <property type="entry name" value="HOMEOBOX_2"/>
    <property type="match status" value="1"/>
</dbReference>
<proteinExistence type="evidence at protein level"/>
<sequence length="305" mass="32167">MSRSFYVDSLIIKDSSRPAPSLPESHPGPDFFIPLGMPSPLVMSVSGPGCPSRKSGAFCVCPLCVTSHLHSSRPPAGAGGGATGTAGAAVAGGGVAGGTGALPLLKSQFSPAPGDAQFCPRVSHAHHHHHPPQHHHHHHQPQQPGSAAAAAAAAAAAAAAAAALGHPQHHAPVCAATTYNMSDPRRFHCLSMGGSDTSQVPNGKRMRTAFTSTQLLELEREFSSNMYLSRLRRIEIATYLNLSEKQVKIWFQNRRVKHKKEGKGASRNNHTSCKCVGSQAHYARSEDEDSLSPASANEDKEISPL</sequence>
<evidence type="ECO:0000255" key="1">
    <source>
        <dbReference type="PROSITE-ProRule" id="PRU00108"/>
    </source>
</evidence>
<evidence type="ECO:0000256" key="2">
    <source>
        <dbReference type="SAM" id="MobiDB-lite"/>
    </source>
</evidence>
<evidence type="ECO:0000269" key="3">
    <source>
    </source>
</evidence>
<evidence type="ECO:0000269" key="4">
    <source>
    </source>
</evidence>
<evidence type="ECO:0000305" key="5"/>
<evidence type="ECO:0007829" key="6">
    <source>
        <dbReference type="PDB" id="8EML"/>
    </source>
</evidence>
<reference key="1">
    <citation type="journal article" date="1995" name="Mech. Dev.">
        <title>Gsh-2, a murine homeobox gene expressed in the developing brain.</title>
        <authorList>
            <person name="Hsieh-Li H.M."/>
            <person name="Witte D.P."/>
            <person name="Szucsik J.C."/>
            <person name="Weinstein M."/>
            <person name="Li H."/>
            <person name="Potter S.S."/>
        </authorList>
    </citation>
    <scope>NUCLEOTIDE SEQUENCE [MRNA]</scope>
    <scope>FUNCTION</scope>
    <scope>DEVELOPMENTAL STAGE</scope>
    <source>
        <strain>NIH Swiss</strain>
    </source>
</reference>
<reference key="2">
    <citation type="journal article" date="1991" name="Proc. Natl. Acad. Sci. U.S.A.">
        <title>Identification of 10 murine homeobox genes.</title>
        <authorList>
            <person name="Singh G."/>
            <person name="Kaur S."/>
            <person name="Stock J.L."/>
            <person name="Jenkins N.A."/>
            <person name="Gilbert D.J."/>
            <person name="Copeland N.G."/>
            <person name="Potter S.S."/>
        </authorList>
    </citation>
    <scope>NUCLEOTIDE SEQUENCE [MRNA] OF 203-262</scope>
</reference>
<reference key="3">
    <citation type="journal article" date="2009" name="Neuron">
        <title>Distinct temporal requirements for the homeobox gene Gsx2 in specifying striatal and olfactory bulb neuronal fates.</title>
        <authorList>
            <person name="Waclaw R.R."/>
            <person name="Wang B."/>
            <person name="Pei Z."/>
            <person name="Ehrman L.A."/>
            <person name="Campbell K."/>
        </authorList>
    </citation>
    <scope>FUNCTION</scope>
    <scope>DEVELOPMENTAL STAGE</scope>
</reference>
<protein>
    <recommendedName>
        <fullName>GS homeobox 2</fullName>
    </recommendedName>
    <alternativeName>
        <fullName>Genetic-screened homeobox 2</fullName>
    </alternativeName>
    <alternativeName>
        <fullName>Homeobox protein GSH-2</fullName>
    </alternativeName>
</protein>
<organism>
    <name type="scientific">Mus musculus</name>
    <name type="common">Mouse</name>
    <dbReference type="NCBI Taxonomy" id="10090"/>
    <lineage>
        <taxon>Eukaryota</taxon>
        <taxon>Metazoa</taxon>
        <taxon>Chordata</taxon>
        <taxon>Craniata</taxon>
        <taxon>Vertebrata</taxon>
        <taxon>Euteleostomi</taxon>
        <taxon>Mammalia</taxon>
        <taxon>Eutheria</taxon>
        <taxon>Euarchontoglires</taxon>
        <taxon>Glires</taxon>
        <taxon>Rodentia</taxon>
        <taxon>Myomorpha</taxon>
        <taxon>Muroidea</taxon>
        <taxon>Muridae</taxon>
        <taxon>Murinae</taxon>
        <taxon>Mus</taxon>
        <taxon>Mus</taxon>
    </lineage>
</organism>
<feature type="chain" id="PRO_0000048897" description="GS homeobox 2">
    <location>
        <begin position="1"/>
        <end position="305"/>
    </location>
</feature>
<feature type="DNA-binding region" description="Homeobox" evidence="1">
    <location>
        <begin position="203"/>
        <end position="262"/>
    </location>
</feature>
<feature type="region of interest" description="Disordered" evidence="2">
    <location>
        <begin position="115"/>
        <end position="151"/>
    </location>
</feature>
<feature type="region of interest" description="Disordered" evidence="2">
    <location>
        <begin position="259"/>
        <end position="305"/>
    </location>
</feature>
<feature type="compositionally biased region" description="Basic residues" evidence="2">
    <location>
        <begin position="123"/>
        <end position="140"/>
    </location>
</feature>
<feature type="compositionally biased region" description="Low complexity" evidence="2">
    <location>
        <begin position="141"/>
        <end position="151"/>
    </location>
</feature>
<feature type="helix" evidence="6">
    <location>
        <begin position="212"/>
        <end position="224"/>
    </location>
</feature>
<feature type="helix" evidence="6">
    <location>
        <begin position="230"/>
        <end position="240"/>
    </location>
</feature>
<feature type="helix" evidence="6">
    <location>
        <begin position="244"/>
        <end position="260"/>
    </location>
</feature>
<keyword id="KW-0002">3D-structure</keyword>
<keyword id="KW-0217">Developmental protein</keyword>
<keyword id="KW-0238">DNA-binding</keyword>
<keyword id="KW-0371">Homeobox</keyword>
<keyword id="KW-0539">Nucleus</keyword>
<keyword id="KW-1185">Reference proteome</keyword>
<keyword id="KW-0804">Transcription</keyword>
<keyword id="KW-0805">Transcription regulation</keyword>
<gene>
    <name type="primary">Gsx2</name>
    <name type="synonym">Gsh-2</name>
    <name type="synonym">Gsh2</name>
</gene>
<accession>P31316</accession>
<comment type="function">
    <text evidence="3 4">Transcription factor that binds 5'-CNAATTAG-3' DNA sequence and regulates the expression of numerous genes including genes important for brain development (PubMed:7619729). During telencephalic development, causes ventralization of pallial progenitors and, depending on the developmental stage, specifies different neuronal fates. At early stages, necessary and sufficient to correctly specify the ventral lateral ganglionic eminence (LGE) and its major derivatives, the striatal projection neurons. At later stages, may specify LGE progenitors toward dorsal LGE fates, including olfactory bulb interneurons (PubMed:19709628).</text>
</comment>
<comment type="subcellular location">
    <subcellularLocation>
        <location>Nucleus</location>
    </subcellularLocation>
</comment>
<comment type="developmental stage">
    <text evidence="3 4">At 10.0 dpc, expressed in a band of primitive neuroepithelial cells in the neural tube, mesencephalon and telencephalon. At 11.5-13.5 dpc, expression is symmetrical, but tightly limited in areas of the forebrain, midbrain and hindbrain (PubMed:7619729). At 11 dpc, in the developing telencephalon, expressed at high levels in cells throughout the presumptive lateral ganglionic eminence (LGE), with an apparent ventral-to-dorsal gradient in expressing cell numbers. Positive cells are also scattered somewhat uniformly throughout the adjacent medial ganglionic eminence. At 12.5 dpc onward, exhibits a clear graded pattern of expression, with low levels found in cells located ventrally and the highest levels confined to those in the most dorsal portion of the LGE (at protein level) (PubMed:19709628). Expression decreases from 14.5 dpc on and becomes undetectable at 16.5 dpc (PubMed:7619729).</text>
</comment>
<comment type="similarity">
    <text evidence="5">Belongs to the Antp homeobox family.</text>
</comment>